<accession>Q4QKM2</accession>
<dbReference type="EMBL" id="CP000057">
    <property type="protein sequence ID" value="AAX88425.1"/>
    <property type="molecule type" value="Genomic_DNA"/>
</dbReference>
<dbReference type="RefSeq" id="WP_005652847.1">
    <property type="nucleotide sequence ID" value="NC_007146.2"/>
</dbReference>
<dbReference type="SMR" id="Q4QKM2"/>
<dbReference type="KEGG" id="hit:NTHI1626"/>
<dbReference type="HOGENOM" id="CLU_105066_1_3_6"/>
<dbReference type="Proteomes" id="UP000002525">
    <property type="component" value="Chromosome"/>
</dbReference>
<dbReference type="GO" id="GO:0005829">
    <property type="term" value="C:cytosol"/>
    <property type="evidence" value="ECO:0007669"/>
    <property type="project" value="TreeGrafter"/>
</dbReference>
<dbReference type="GO" id="GO:0003677">
    <property type="term" value="F:DNA binding"/>
    <property type="evidence" value="ECO:0007669"/>
    <property type="project" value="UniProtKB-UniRule"/>
</dbReference>
<dbReference type="GO" id="GO:0030527">
    <property type="term" value="F:structural constituent of chromatin"/>
    <property type="evidence" value="ECO:0007669"/>
    <property type="project" value="InterPro"/>
</dbReference>
<dbReference type="GO" id="GO:0006310">
    <property type="term" value="P:DNA recombination"/>
    <property type="evidence" value="ECO:0007669"/>
    <property type="project" value="UniProtKB-UniRule"/>
</dbReference>
<dbReference type="GO" id="GO:0009893">
    <property type="term" value="P:positive regulation of metabolic process"/>
    <property type="evidence" value="ECO:0007669"/>
    <property type="project" value="UniProtKB-ARBA"/>
</dbReference>
<dbReference type="GO" id="GO:0006355">
    <property type="term" value="P:regulation of DNA-templated transcription"/>
    <property type="evidence" value="ECO:0007669"/>
    <property type="project" value="UniProtKB-UniRule"/>
</dbReference>
<dbReference type="GO" id="GO:0006417">
    <property type="term" value="P:regulation of translation"/>
    <property type="evidence" value="ECO:0007669"/>
    <property type="project" value="UniProtKB-UniRule"/>
</dbReference>
<dbReference type="CDD" id="cd13835">
    <property type="entry name" value="IHF_A"/>
    <property type="match status" value="1"/>
</dbReference>
<dbReference type="FunFam" id="4.10.520.10:FF:000002">
    <property type="entry name" value="Integration host factor subunit alpha"/>
    <property type="match status" value="1"/>
</dbReference>
<dbReference type="Gene3D" id="4.10.520.10">
    <property type="entry name" value="IHF-like DNA-binding proteins"/>
    <property type="match status" value="1"/>
</dbReference>
<dbReference type="HAMAP" id="MF_00380">
    <property type="entry name" value="IHF_alpha"/>
    <property type="match status" value="1"/>
</dbReference>
<dbReference type="InterPro" id="IPR000119">
    <property type="entry name" value="Hist_DNA-bd"/>
</dbReference>
<dbReference type="InterPro" id="IPR020816">
    <property type="entry name" value="Histone-like_DNA-bd_CS"/>
</dbReference>
<dbReference type="InterPro" id="IPR010992">
    <property type="entry name" value="IHF-like_DNA-bd_dom_sf"/>
</dbReference>
<dbReference type="InterPro" id="IPR005684">
    <property type="entry name" value="IHF_alpha"/>
</dbReference>
<dbReference type="NCBIfam" id="TIGR00987">
    <property type="entry name" value="himA"/>
    <property type="match status" value="1"/>
</dbReference>
<dbReference type="NCBIfam" id="NF001401">
    <property type="entry name" value="PRK00285.1"/>
    <property type="match status" value="1"/>
</dbReference>
<dbReference type="PANTHER" id="PTHR33175">
    <property type="entry name" value="DNA-BINDING PROTEIN HU"/>
    <property type="match status" value="1"/>
</dbReference>
<dbReference type="PANTHER" id="PTHR33175:SF2">
    <property type="entry name" value="INTEGRATION HOST FACTOR SUBUNIT ALPHA"/>
    <property type="match status" value="1"/>
</dbReference>
<dbReference type="Pfam" id="PF00216">
    <property type="entry name" value="Bac_DNA_binding"/>
    <property type="match status" value="1"/>
</dbReference>
<dbReference type="PRINTS" id="PR01727">
    <property type="entry name" value="DNABINDINGHU"/>
</dbReference>
<dbReference type="SMART" id="SM00411">
    <property type="entry name" value="BHL"/>
    <property type="match status" value="1"/>
</dbReference>
<dbReference type="SUPFAM" id="SSF47729">
    <property type="entry name" value="IHF-like DNA-binding proteins"/>
    <property type="match status" value="1"/>
</dbReference>
<dbReference type="PROSITE" id="PS00045">
    <property type="entry name" value="HISTONE_LIKE"/>
    <property type="match status" value="1"/>
</dbReference>
<gene>
    <name evidence="1" type="primary">ihfA</name>
    <name evidence="1" type="synonym">himA</name>
    <name type="ordered locus">NTHI1626</name>
</gene>
<feature type="chain" id="PRO_0000277732" description="Integration host factor subunit alpha">
    <location>
        <begin position="1"/>
        <end position="96"/>
    </location>
</feature>
<sequence length="96" mass="10907">MATITKLDIIEYLSDKYHLSKQDTKNVVENFLEEIRLSLESGQDVKLSGFGNFELRDKSSRPGRNPKTGDVVPVSARRVVTFKPGQKLRARVEKTK</sequence>
<comment type="function">
    <text evidence="1">This protein is one of the two subunits of integration host factor, a specific DNA-binding protein that functions in genetic recombination as well as in transcriptional and translational control.</text>
</comment>
<comment type="subunit">
    <text evidence="1">Heterodimer of an alpha and a beta chain.</text>
</comment>
<comment type="similarity">
    <text evidence="1">Belongs to the bacterial histone-like protein family.</text>
</comment>
<protein>
    <recommendedName>
        <fullName evidence="1">Integration host factor subunit alpha</fullName>
        <shortName evidence="1">IHF-alpha</shortName>
    </recommendedName>
</protein>
<keyword id="KW-0233">DNA recombination</keyword>
<keyword id="KW-0238">DNA-binding</keyword>
<keyword id="KW-0804">Transcription</keyword>
<keyword id="KW-0805">Transcription regulation</keyword>
<keyword id="KW-0810">Translation regulation</keyword>
<organism>
    <name type="scientific">Haemophilus influenzae (strain 86-028NP)</name>
    <dbReference type="NCBI Taxonomy" id="281310"/>
    <lineage>
        <taxon>Bacteria</taxon>
        <taxon>Pseudomonadati</taxon>
        <taxon>Pseudomonadota</taxon>
        <taxon>Gammaproteobacteria</taxon>
        <taxon>Pasteurellales</taxon>
        <taxon>Pasteurellaceae</taxon>
        <taxon>Haemophilus</taxon>
    </lineage>
</organism>
<reference key="1">
    <citation type="journal article" date="2005" name="J. Bacteriol.">
        <title>Genomic sequence of an otitis media isolate of nontypeable Haemophilus influenzae: comparative study with H. influenzae serotype d, strain KW20.</title>
        <authorList>
            <person name="Harrison A."/>
            <person name="Dyer D.W."/>
            <person name="Gillaspy A."/>
            <person name="Ray W.C."/>
            <person name="Mungur R."/>
            <person name="Carson M.B."/>
            <person name="Zhong H."/>
            <person name="Gipson J."/>
            <person name="Gipson M."/>
            <person name="Johnson L.S."/>
            <person name="Lewis L."/>
            <person name="Bakaletz L.O."/>
            <person name="Munson R.S. Jr."/>
        </authorList>
    </citation>
    <scope>NUCLEOTIDE SEQUENCE [LARGE SCALE GENOMIC DNA]</scope>
    <source>
        <strain>86-028NP</strain>
    </source>
</reference>
<name>IHFA_HAEI8</name>
<evidence type="ECO:0000255" key="1">
    <source>
        <dbReference type="HAMAP-Rule" id="MF_00380"/>
    </source>
</evidence>
<proteinExistence type="inferred from homology"/>